<name>MLIC_CUPNH</name>
<dbReference type="EMBL" id="AM260479">
    <property type="protein sequence ID" value="CAJ93597.1"/>
    <property type="molecule type" value="Genomic_DNA"/>
</dbReference>
<dbReference type="RefSeq" id="WP_011615702.1">
    <property type="nucleotide sequence ID" value="NC_008313.1"/>
</dbReference>
<dbReference type="SMR" id="Q0K8S4"/>
<dbReference type="STRING" id="381666.H16_A2509"/>
<dbReference type="KEGG" id="reh:H16_A2509"/>
<dbReference type="PATRIC" id="fig|381666.6.peg.2901"/>
<dbReference type="eggNOG" id="COG3895">
    <property type="taxonomic scope" value="Bacteria"/>
</dbReference>
<dbReference type="HOGENOM" id="CLU_151151_0_0_4"/>
<dbReference type="OrthoDB" id="8550040at2"/>
<dbReference type="Proteomes" id="UP000008210">
    <property type="component" value="Chromosome 1"/>
</dbReference>
<dbReference type="GO" id="GO:0009279">
    <property type="term" value="C:cell outer membrane"/>
    <property type="evidence" value="ECO:0007669"/>
    <property type="project" value="UniProtKB-SubCell"/>
</dbReference>
<dbReference type="Gene3D" id="2.40.128.200">
    <property type="match status" value="1"/>
</dbReference>
<dbReference type="InterPro" id="IPR018660">
    <property type="entry name" value="MliC"/>
</dbReference>
<dbReference type="InterPro" id="IPR036328">
    <property type="entry name" value="MliC_sf"/>
</dbReference>
<dbReference type="Pfam" id="PF09864">
    <property type="entry name" value="MliC"/>
    <property type="match status" value="1"/>
</dbReference>
<dbReference type="SUPFAM" id="SSF141488">
    <property type="entry name" value="YdhA-like"/>
    <property type="match status" value="1"/>
</dbReference>
<dbReference type="PROSITE" id="PS51257">
    <property type="entry name" value="PROKAR_LIPOPROTEIN"/>
    <property type="match status" value="1"/>
</dbReference>
<comment type="function">
    <text evidence="2">Specifically inhibits C-type lysozymes.</text>
</comment>
<comment type="subunit">
    <text evidence="2">Homodimer.</text>
</comment>
<comment type="subcellular location">
    <subcellularLocation>
        <location evidence="1">Cell outer membrane</location>
        <topology evidence="3">Lipid-anchor</topology>
    </subcellularLocation>
    <text evidence="1">Anchored to the periplasmic side.</text>
</comment>
<comment type="similarity">
    <text evidence="4">Belongs to the MliC family. Type 2 subfamily.</text>
</comment>
<reference key="1">
    <citation type="journal article" date="2006" name="Nat. Biotechnol.">
        <title>Genome sequence of the bioplastic-producing 'Knallgas' bacterium Ralstonia eutropha H16.</title>
        <authorList>
            <person name="Pohlmann A."/>
            <person name="Fricke W.F."/>
            <person name="Reinecke F."/>
            <person name="Kusian B."/>
            <person name="Liesegang H."/>
            <person name="Cramm R."/>
            <person name="Eitinger T."/>
            <person name="Ewering C."/>
            <person name="Poetter M."/>
            <person name="Schwartz E."/>
            <person name="Strittmatter A."/>
            <person name="Voss I."/>
            <person name="Gottschalk G."/>
            <person name="Steinbuechel A."/>
            <person name="Friedrich B."/>
            <person name="Bowien B."/>
        </authorList>
    </citation>
    <scope>NUCLEOTIDE SEQUENCE [LARGE SCALE GENOMIC DNA]</scope>
    <source>
        <strain>ATCC 17699 / DSM 428 / KCTC 22496 / NCIMB 10442 / H16 / Stanier 337</strain>
    </source>
</reference>
<keyword id="KW-0998">Cell outer membrane</keyword>
<keyword id="KW-1015">Disulfide bond</keyword>
<keyword id="KW-0449">Lipoprotein</keyword>
<keyword id="KW-0472">Membrane</keyword>
<keyword id="KW-0564">Palmitate</keyword>
<keyword id="KW-1185">Reference proteome</keyword>
<keyword id="KW-0732">Signal</keyword>
<protein>
    <recommendedName>
        <fullName evidence="2">Membrane-bound lysozyme inhibitor of C-type lysozyme</fullName>
    </recommendedName>
</protein>
<evidence type="ECO:0000250" key="1">
    <source>
        <dbReference type="UniProtKB" id="P28224"/>
    </source>
</evidence>
<evidence type="ECO:0000250" key="2">
    <source>
        <dbReference type="UniProtKB" id="Q9I574"/>
    </source>
</evidence>
<evidence type="ECO:0000255" key="3">
    <source>
        <dbReference type="PROSITE-ProRule" id="PRU00303"/>
    </source>
</evidence>
<evidence type="ECO:0000305" key="4"/>
<accession>Q0K8S4</accession>
<gene>
    <name type="primary">mliC</name>
    <name type="ordered locus">H16_A2509</name>
</gene>
<sequence length="125" mass="13197">MTTRPILSCARAVALLATLGACAAAHAARAPGIDGVRFPDVRAVRYQCDGGKTLSVRYFNSPDNQAAVFRIDGKPVLAVSTVSASGARYAGGRYEWWTKGEEGTLRDLMQAENAAPALANCQAKP</sequence>
<proteinExistence type="inferred from homology"/>
<feature type="signal peptide" evidence="3">
    <location>
        <begin position="1"/>
        <end position="21"/>
    </location>
</feature>
<feature type="chain" id="PRO_5000079991" description="Membrane-bound lysozyme inhibitor of C-type lysozyme">
    <location>
        <begin position="22"/>
        <end position="125"/>
    </location>
</feature>
<feature type="site" description="Directly involved in lysozyme active site inhibition" evidence="2">
    <location>
        <position position="85"/>
    </location>
</feature>
<feature type="site" description="Directly involved in lysozyme active site inhibition" evidence="2">
    <location>
        <position position="99"/>
    </location>
</feature>
<feature type="lipid moiety-binding region" description="N-palmitoyl cysteine" evidence="3">
    <location>
        <position position="22"/>
    </location>
</feature>
<feature type="lipid moiety-binding region" description="S-diacylglycerol cysteine" evidence="3">
    <location>
        <position position="22"/>
    </location>
</feature>
<feature type="disulfide bond" evidence="2">
    <location>
        <begin position="48"/>
        <end position="121"/>
    </location>
</feature>
<organism>
    <name type="scientific">Cupriavidus necator (strain ATCC 17699 / DSM 428 / KCTC 22496 / NCIMB 10442 / H16 / Stanier 337)</name>
    <name type="common">Ralstonia eutropha</name>
    <dbReference type="NCBI Taxonomy" id="381666"/>
    <lineage>
        <taxon>Bacteria</taxon>
        <taxon>Pseudomonadati</taxon>
        <taxon>Pseudomonadota</taxon>
        <taxon>Betaproteobacteria</taxon>
        <taxon>Burkholderiales</taxon>
        <taxon>Burkholderiaceae</taxon>
        <taxon>Cupriavidus</taxon>
    </lineage>
</organism>